<accession>M9PD06</accession>
<accession>M9PFQ1</accession>
<accession>M9PFZ0</accession>
<accession>M9PG46</accession>
<gene>
    <name evidence="10" type="primary">Usp32</name>
    <name evidence="8" type="synonym">Usp15</name>
    <name evidence="10" type="ORF">CG8334</name>
</gene>
<name>UBP32_DROME</name>
<evidence type="ECO:0000250" key="1">
    <source>
        <dbReference type="UniProtKB" id="Q8NFA0"/>
    </source>
</evidence>
<evidence type="ECO:0000255" key="2"/>
<evidence type="ECO:0000255" key="3">
    <source>
        <dbReference type="PROSITE-ProRule" id="PRU00448"/>
    </source>
</evidence>
<evidence type="ECO:0000255" key="4">
    <source>
        <dbReference type="PROSITE-ProRule" id="PRU00613"/>
    </source>
</evidence>
<evidence type="ECO:0000255" key="5">
    <source>
        <dbReference type="PROSITE-ProRule" id="PRU01035"/>
    </source>
</evidence>
<evidence type="ECO:0000256" key="6">
    <source>
        <dbReference type="SAM" id="MobiDB-lite"/>
    </source>
</evidence>
<evidence type="ECO:0000269" key="7">
    <source>
    </source>
</evidence>
<evidence type="ECO:0000303" key="8">
    <source>
    </source>
</evidence>
<evidence type="ECO:0000305" key="9"/>
<evidence type="ECO:0000312" key="10">
    <source>
        <dbReference type="FlyBase" id="FBgn0036913"/>
    </source>
</evidence>
<evidence type="ECO:0000312" key="11">
    <source>
        <dbReference type="Proteomes" id="UP000000803"/>
    </source>
</evidence>
<protein>
    <recommendedName>
        <fullName evidence="9">Ubiquitin carboxyl-terminal hydrolase 32</fullName>
        <ecNumber evidence="1">3.4.19.12</ecNumber>
    </recommendedName>
</protein>
<comment type="function">
    <text evidence="7">Deubiquitinating enzyme that acts as an inhibitor of mitophagy probably by counteracting the action of park. Possibly functions by hydrolyzing ubiquitin attached by park on target proteins, thereby reducing park's ability to drive mitophagy.</text>
</comment>
<comment type="catalytic activity">
    <reaction evidence="1">
        <text>Thiol-dependent hydrolysis of ester, thioester, amide, peptide and isopeptide bonds formed by the C-terminal Gly of ubiquitin (a 76-residue protein attached to proteins as an intracellular targeting signal).</text>
        <dbReference type="EC" id="3.4.19.12"/>
    </reaction>
</comment>
<comment type="alternative products">
    <event type="alternative splicing"/>
    <isoform>
        <id>M9PD06-1</id>
        <name evidence="10">B</name>
        <sequence type="displayed"/>
    </isoform>
    <isoform>
        <id>M9PD06-2</id>
        <name evidence="10">C</name>
        <sequence type="described" ref="VSP_059180"/>
    </isoform>
    <isoform>
        <id>M9PD06-3</id>
        <name evidence="10">D</name>
        <sequence type="described" ref="VSP_059180 VSP_059181"/>
    </isoform>
    <isoform>
        <id>M9PD06-4</id>
        <name evidence="10">E</name>
        <sequence type="described" ref="VSP_059181"/>
    </isoform>
</comment>
<comment type="disruption phenotype">
    <text evidence="7">RNAi-mediated knockdown has no effect on the number of mitochondrial clumps and mitochondrial membrane potential in the indirect flight muscles, and there is also no effect on climbing performance. However RNAi-mediated knockdown rescues the defective mitophagy phenotypes caused by mutations in park; reducing the number of mitochondrial clumps, and improving mitochondrial membrane potential and climbing performance in park-deficient flies.</text>
</comment>
<comment type="similarity">
    <text evidence="9">Belongs to the peptidase C19 family. USP20/USP33 subfamily.</text>
</comment>
<proteinExistence type="inferred from homology"/>
<reference evidence="11" key="1">
    <citation type="journal article" date="2000" name="Science">
        <title>The genome sequence of Drosophila melanogaster.</title>
        <authorList>
            <person name="Adams M.D."/>
            <person name="Celniker S.E."/>
            <person name="Holt R.A."/>
            <person name="Evans C.A."/>
            <person name="Gocayne J.D."/>
            <person name="Amanatides P.G."/>
            <person name="Scherer S.E."/>
            <person name="Li P.W."/>
            <person name="Hoskins R.A."/>
            <person name="Galle R.F."/>
            <person name="George R.A."/>
            <person name="Lewis S.E."/>
            <person name="Richards S."/>
            <person name="Ashburner M."/>
            <person name="Henderson S.N."/>
            <person name="Sutton G.G."/>
            <person name="Wortman J.R."/>
            <person name="Yandell M.D."/>
            <person name="Zhang Q."/>
            <person name="Chen L.X."/>
            <person name="Brandon R.C."/>
            <person name="Rogers Y.-H.C."/>
            <person name="Blazej R.G."/>
            <person name="Champe M."/>
            <person name="Pfeiffer B.D."/>
            <person name="Wan K.H."/>
            <person name="Doyle C."/>
            <person name="Baxter E.G."/>
            <person name="Helt G."/>
            <person name="Nelson C.R."/>
            <person name="Miklos G.L.G."/>
            <person name="Abril J.F."/>
            <person name="Agbayani A."/>
            <person name="An H.-J."/>
            <person name="Andrews-Pfannkoch C."/>
            <person name="Baldwin D."/>
            <person name="Ballew R.M."/>
            <person name="Basu A."/>
            <person name="Baxendale J."/>
            <person name="Bayraktaroglu L."/>
            <person name="Beasley E.M."/>
            <person name="Beeson K.Y."/>
            <person name="Benos P.V."/>
            <person name="Berman B.P."/>
            <person name="Bhandari D."/>
            <person name="Bolshakov S."/>
            <person name="Borkova D."/>
            <person name="Botchan M.R."/>
            <person name="Bouck J."/>
            <person name="Brokstein P."/>
            <person name="Brottier P."/>
            <person name="Burtis K.C."/>
            <person name="Busam D.A."/>
            <person name="Butler H."/>
            <person name="Cadieu E."/>
            <person name="Center A."/>
            <person name="Chandra I."/>
            <person name="Cherry J.M."/>
            <person name="Cawley S."/>
            <person name="Dahlke C."/>
            <person name="Davenport L.B."/>
            <person name="Davies P."/>
            <person name="de Pablos B."/>
            <person name="Delcher A."/>
            <person name="Deng Z."/>
            <person name="Mays A.D."/>
            <person name="Dew I."/>
            <person name="Dietz S.M."/>
            <person name="Dodson K."/>
            <person name="Doup L.E."/>
            <person name="Downes M."/>
            <person name="Dugan-Rocha S."/>
            <person name="Dunkov B.C."/>
            <person name="Dunn P."/>
            <person name="Durbin K.J."/>
            <person name="Evangelista C.C."/>
            <person name="Ferraz C."/>
            <person name="Ferriera S."/>
            <person name="Fleischmann W."/>
            <person name="Fosler C."/>
            <person name="Gabrielian A.E."/>
            <person name="Garg N.S."/>
            <person name="Gelbart W.M."/>
            <person name="Glasser K."/>
            <person name="Glodek A."/>
            <person name="Gong F."/>
            <person name="Gorrell J.H."/>
            <person name="Gu Z."/>
            <person name="Guan P."/>
            <person name="Harris M."/>
            <person name="Harris N.L."/>
            <person name="Harvey D.A."/>
            <person name="Heiman T.J."/>
            <person name="Hernandez J.R."/>
            <person name="Houck J."/>
            <person name="Hostin D."/>
            <person name="Houston K.A."/>
            <person name="Howland T.J."/>
            <person name="Wei M.-H."/>
            <person name="Ibegwam C."/>
            <person name="Jalali M."/>
            <person name="Kalush F."/>
            <person name="Karpen G.H."/>
            <person name="Ke Z."/>
            <person name="Kennison J.A."/>
            <person name="Ketchum K.A."/>
            <person name="Kimmel B.E."/>
            <person name="Kodira C.D."/>
            <person name="Kraft C.L."/>
            <person name="Kravitz S."/>
            <person name="Kulp D."/>
            <person name="Lai Z."/>
            <person name="Lasko P."/>
            <person name="Lei Y."/>
            <person name="Levitsky A.A."/>
            <person name="Li J.H."/>
            <person name="Li Z."/>
            <person name="Liang Y."/>
            <person name="Lin X."/>
            <person name="Liu X."/>
            <person name="Mattei B."/>
            <person name="McIntosh T.C."/>
            <person name="McLeod M.P."/>
            <person name="McPherson D."/>
            <person name="Merkulov G."/>
            <person name="Milshina N.V."/>
            <person name="Mobarry C."/>
            <person name="Morris J."/>
            <person name="Moshrefi A."/>
            <person name="Mount S.M."/>
            <person name="Moy M."/>
            <person name="Murphy B."/>
            <person name="Murphy L."/>
            <person name="Muzny D.M."/>
            <person name="Nelson D.L."/>
            <person name="Nelson D.R."/>
            <person name="Nelson K.A."/>
            <person name="Nixon K."/>
            <person name="Nusskern D.R."/>
            <person name="Pacleb J.M."/>
            <person name="Palazzolo M."/>
            <person name="Pittman G.S."/>
            <person name="Pan S."/>
            <person name="Pollard J."/>
            <person name="Puri V."/>
            <person name="Reese M.G."/>
            <person name="Reinert K."/>
            <person name="Remington K."/>
            <person name="Saunders R.D.C."/>
            <person name="Scheeler F."/>
            <person name="Shen H."/>
            <person name="Shue B.C."/>
            <person name="Siden-Kiamos I."/>
            <person name="Simpson M."/>
            <person name="Skupski M.P."/>
            <person name="Smith T.J."/>
            <person name="Spier E."/>
            <person name="Spradling A.C."/>
            <person name="Stapleton M."/>
            <person name="Strong R."/>
            <person name="Sun E."/>
            <person name="Svirskas R."/>
            <person name="Tector C."/>
            <person name="Turner R."/>
            <person name="Venter E."/>
            <person name="Wang A.H."/>
            <person name="Wang X."/>
            <person name="Wang Z.-Y."/>
            <person name="Wassarman D.A."/>
            <person name="Weinstock G.M."/>
            <person name="Weissenbach J."/>
            <person name="Williams S.M."/>
            <person name="Woodage T."/>
            <person name="Worley K.C."/>
            <person name="Wu D."/>
            <person name="Yang S."/>
            <person name="Yao Q.A."/>
            <person name="Ye J."/>
            <person name="Yeh R.-F."/>
            <person name="Zaveri J.S."/>
            <person name="Zhan M."/>
            <person name="Zhang G."/>
            <person name="Zhao Q."/>
            <person name="Zheng L."/>
            <person name="Zheng X.H."/>
            <person name="Zhong F.N."/>
            <person name="Zhong W."/>
            <person name="Zhou X."/>
            <person name="Zhu S.C."/>
            <person name="Zhu X."/>
            <person name="Smith H.O."/>
            <person name="Gibbs R.A."/>
            <person name="Myers E.W."/>
            <person name="Rubin G.M."/>
            <person name="Venter J.C."/>
        </authorList>
    </citation>
    <scope>NUCLEOTIDE SEQUENCE [LARGE SCALE GENOMIC DNA]</scope>
    <source>
        <strain evidence="11">Berkeley</strain>
    </source>
</reference>
<reference evidence="11" key="2">
    <citation type="journal article" date="2002" name="Genome Biol.">
        <title>Annotation of the Drosophila melanogaster euchromatic genome: a systematic review.</title>
        <authorList>
            <person name="Misra S."/>
            <person name="Crosby M.A."/>
            <person name="Mungall C.J."/>
            <person name="Matthews B.B."/>
            <person name="Campbell K.S."/>
            <person name="Hradecky P."/>
            <person name="Huang Y."/>
            <person name="Kaminker J.S."/>
            <person name="Millburn G.H."/>
            <person name="Prochnik S.E."/>
            <person name="Smith C.D."/>
            <person name="Tupy J.L."/>
            <person name="Whitfield E.J."/>
            <person name="Bayraktaroglu L."/>
            <person name="Berman B.P."/>
            <person name="Bettencourt B.R."/>
            <person name="Celniker S.E."/>
            <person name="de Grey A.D.N.J."/>
            <person name="Drysdale R.A."/>
            <person name="Harris N.L."/>
            <person name="Richter J."/>
            <person name="Russo S."/>
            <person name="Schroeder A.J."/>
            <person name="Shu S.Q."/>
            <person name="Stapleton M."/>
            <person name="Yamada C."/>
            <person name="Ashburner M."/>
            <person name="Gelbart W.M."/>
            <person name="Rubin G.M."/>
            <person name="Lewis S.E."/>
        </authorList>
    </citation>
    <scope>GENOME REANNOTATION</scope>
    <source>
        <strain evidence="11">Berkeley</strain>
    </source>
</reference>
<reference evidence="9" key="3">
    <citation type="journal article" date="2014" name="Hum. Mol. Genet.">
        <title>The deubiquitinase USP15 antagonizes Parkin-mediated mitochondrial ubiquitination and mitophagy.</title>
        <authorList>
            <person name="Cornelissen T."/>
            <person name="Haddad D."/>
            <person name="Wauters F."/>
            <person name="Van Humbeeck C."/>
            <person name="Mandemakers W."/>
            <person name="Koentjoro B."/>
            <person name="Sue C."/>
            <person name="Gevaert K."/>
            <person name="De Strooper B."/>
            <person name="Verstreken P."/>
            <person name="Vandenberghe W."/>
        </authorList>
    </citation>
    <scope>FUNCTION</scope>
    <scope>DISRUPTION PHENOTYPE</scope>
</reference>
<dbReference type="EC" id="3.4.19.12" evidence="1"/>
<dbReference type="EMBL" id="AE014296">
    <property type="protein sequence ID" value="AGB94767.1"/>
    <property type="molecule type" value="Genomic_DNA"/>
</dbReference>
<dbReference type="EMBL" id="AE014296">
    <property type="protein sequence ID" value="AGB94768.1"/>
    <property type="molecule type" value="Genomic_DNA"/>
</dbReference>
<dbReference type="EMBL" id="AE014296">
    <property type="protein sequence ID" value="AGB94769.1"/>
    <property type="molecule type" value="Genomic_DNA"/>
</dbReference>
<dbReference type="EMBL" id="AE014296">
    <property type="protein sequence ID" value="AGB94770.1"/>
    <property type="molecule type" value="Genomic_DNA"/>
</dbReference>
<dbReference type="RefSeq" id="NP_001262074.1">
    <property type="nucleotide sequence ID" value="NM_001275145.2"/>
</dbReference>
<dbReference type="RefSeq" id="NP_001262075.1">
    <property type="nucleotide sequence ID" value="NM_001275146.2"/>
</dbReference>
<dbReference type="RefSeq" id="NP_001262076.1">
    <property type="nucleotide sequence ID" value="NM_001275147.2"/>
</dbReference>
<dbReference type="RefSeq" id="NP_001262077.1">
    <property type="nucleotide sequence ID" value="NM_001275148.2"/>
</dbReference>
<dbReference type="SMR" id="M9PD06"/>
<dbReference type="FunCoup" id="M9PD06">
    <property type="interactions" value="2034"/>
</dbReference>
<dbReference type="STRING" id="7227.FBpp0304458"/>
<dbReference type="MEROPS" id="C19.A48"/>
<dbReference type="GlyGen" id="M9PD06">
    <property type="glycosylation" value="1 site"/>
</dbReference>
<dbReference type="PaxDb" id="7227-FBpp0074659"/>
<dbReference type="EnsemblMetazoa" id="FBtr0479916">
    <property type="protein sequence ID" value="FBpp0428248"/>
    <property type="gene ID" value="FBgn0036913"/>
</dbReference>
<dbReference type="GeneID" id="40169"/>
<dbReference type="KEGG" id="dme:Dmel_CG8334"/>
<dbReference type="AGR" id="FB:FBgn0036913"/>
<dbReference type="CTD" id="84669"/>
<dbReference type="FlyBase" id="FBgn0036913">
    <property type="gene designation" value="Usp32"/>
</dbReference>
<dbReference type="VEuPathDB" id="VectorBase:FBgn0036913"/>
<dbReference type="eggNOG" id="KOG1870">
    <property type="taxonomic scope" value="Eukaryota"/>
</dbReference>
<dbReference type="InParanoid" id="M9PD06"/>
<dbReference type="OrthoDB" id="265776at2759"/>
<dbReference type="BioGRID-ORCS" id="40169">
    <property type="hits" value="0 hits in 3 CRISPR screens"/>
</dbReference>
<dbReference type="GenomeRNAi" id="40169"/>
<dbReference type="PRO" id="PR:M9PD06"/>
<dbReference type="Proteomes" id="UP000000803">
    <property type="component" value="Chromosome 3L"/>
</dbReference>
<dbReference type="Bgee" id="FBgn0036913">
    <property type="expression patterns" value="Expressed in sensory neuron in arthropod fat body and 133 other cell types or tissues"/>
</dbReference>
<dbReference type="ExpressionAtlas" id="M9PD06">
    <property type="expression patterns" value="baseline and differential"/>
</dbReference>
<dbReference type="GO" id="GO:0005794">
    <property type="term" value="C:Golgi apparatus"/>
    <property type="evidence" value="ECO:0000318"/>
    <property type="project" value="GO_Central"/>
</dbReference>
<dbReference type="GO" id="GO:0005509">
    <property type="term" value="F:calcium ion binding"/>
    <property type="evidence" value="ECO:0007669"/>
    <property type="project" value="InterPro"/>
</dbReference>
<dbReference type="GO" id="GO:0004843">
    <property type="term" value="F:cysteine-type deubiquitinase activity"/>
    <property type="evidence" value="ECO:0000318"/>
    <property type="project" value="GO_Central"/>
</dbReference>
<dbReference type="GO" id="GO:0016579">
    <property type="term" value="P:protein deubiquitination"/>
    <property type="evidence" value="ECO:0007669"/>
    <property type="project" value="InterPro"/>
</dbReference>
<dbReference type="GO" id="GO:0006508">
    <property type="term" value="P:proteolysis"/>
    <property type="evidence" value="ECO:0007669"/>
    <property type="project" value="UniProtKB-KW"/>
</dbReference>
<dbReference type="CDD" id="cd00051">
    <property type="entry name" value="EFh"/>
    <property type="match status" value="1"/>
</dbReference>
<dbReference type="FunFam" id="3.90.70.10:FF:000080">
    <property type="entry name" value="Ubiquitin carboxyl-terminal hydrolase 15"/>
    <property type="match status" value="1"/>
</dbReference>
<dbReference type="FunFam" id="1.10.238.10:FF:000081">
    <property type="entry name" value="Ubiquitin carboxyl-terminal hydrolase 32"/>
    <property type="match status" value="1"/>
</dbReference>
<dbReference type="FunFam" id="3.10.20.90:FF:000218">
    <property type="entry name" value="Ubiquitin carboxyl-terminal hydrolase 32"/>
    <property type="match status" value="1"/>
</dbReference>
<dbReference type="FunFam" id="3.90.70.10:FF:000132">
    <property type="entry name" value="Ubiquitin carboxyl-terminal hydrolase 32"/>
    <property type="match status" value="1"/>
</dbReference>
<dbReference type="Gene3D" id="3.90.70.10">
    <property type="entry name" value="Cysteine proteinases"/>
    <property type="match status" value="2"/>
</dbReference>
<dbReference type="Gene3D" id="3.30.2230.10">
    <property type="entry name" value="DUSP-like"/>
    <property type="match status" value="1"/>
</dbReference>
<dbReference type="Gene3D" id="1.10.238.10">
    <property type="entry name" value="EF-hand"/>
    <property type="match status" value="1"/>
</dbReference>
<dbReference type="Gene3D" id="3.10.20.90">
    <property type="entry name" value="Phosphatidylinositol 3-kinase Catalytic Subunit, Chain A, domain 1"/>
    <property type="match status" value="1"/>
</dbReference>
<dbReference type="InterPro" id="IPR035927">
    <property type="entry name" value="DUSP-like_sf"/>
</dbReference>
<dbReference type="InterPro" id="IPR011992">
    <property type="entry name" value="EF-hand-dom_pair"/>
</dbReference>
<dbReference type="InterPro" id="IPR018247">
    <property type="entry name" value="EF_Hand_1_Ca_BS"/>
</dbReference>
<dbReference type="InterPro" id="IPR002048">
    <property type="entry name" value="EF_hand_dom"/>
</dbReference>
<dbReference type="InterPro" id="IPR038765">
    <property type="entry name" value="Papain-like_cys_pep_sf"/>
</dbReference>
<dbReference type="InterPro" id="IPR006615">
    <property type="entry name" value="Pept_C19_DUSP"/>
</dbReference>
<dbReference type="InterPro" id="IPR001394">
    <property type="entry name" value="Peptidase_C19_UCH"/>
</dbReference>
<dbReference type="InterPro" id="IPR050185">
    <property type="entry name" value="Ub_carboxyl-term_hydrolase"/>
</dbReference>
<dbReference type="InterPro" id="IPR018200">
    <property type="entry name" value="USP_CS"/>
</dbReference>
<dbReference type="InterPro" id="IPR028889">
    <property type="entry name" value="USP_dom"/>
</dbReference>
<dbReference type="PANTHER" id="PTHR21646">
    <property type="entry name" value="UBIQUITIN CARBOXYL-TERMINAL HYDROLASE"/>
    <property type="match status" value="1"/>
</dbReference>
<dbReference type="PANTHER" id="PTHR21646:SF76">
    <property type="entry name" value="UBIQUITIN CARBOXYL-TERMINAL HYDROLASE 32"/>
    <property type="match status" value="1"/>
</dbReference>
<dbReference type="Pfam" id="PF06337">
    <property type="entry name" value="DUSP"/>
    <property type="match status" value="1"/>
</dbReference>
<dbReference type="Pfam" id="PF13499">
    <property type="entry name" value="EF-hand_7"/>
    <property type="match status" value="1"/>
</dbReference>
<dbReference type="Pfam" id="PF00443">
    <property type="entry name" value="UCH"/>
    <property type="match status" value="2"/>
</dbReference>
<dbReference type="PRINTS" id="PR00450">
    <property type="entry name" value="RECOVERIN"/>
</dbReference>
<dbReference type="SMART" id="SM00695">
    <property type="entry name" value="DUSP"/>
    <property type="match status" value="1"/>
</dbReference>
<dbReference type="SMART" id="SM00054">
    <property type="entry name" value="EFh"/>
    <property type="match status" value="2"/>
</dbReference>
<dbReference type="SUPFAM" id="SSF54001">
    <property type="entry name" value="Cysteine proteinases"/>
    <property type="match status" value="1"/>
</dbReference>
<dbReference type="SUPFAM" id="SSF143791">
    <property type="entry name" value="DUSP-like"/>
    <property type="match status" value="1"/>
</dbReference>
<dbReference type="SUPFAM" id="SSF47473">
    <property type="entry name" value="EF-hand"/>
    <property type="match status" value="1"/>
</dbReference>
<dbReference type="PROSITE" id="PS51283">
    <property type="entry name" value="DUSP"/>
    <property type="match status" value="1"/>
</dbReference>
<dbReference type="PROSITE" id="PS00018">
    <property type="entry name" value="EF_HAND_1"/>
    <property type="match status" value="1"/>
</dbReference>
<dbReference type="PROSITE" id="PS50222">
    <property type="entry name" value="EF_HAND_2"/>
    <property type="match status" value="2"/>
</dbReference>
<dbReference type="PROSITE" id="PS00972">
    <property type="entry name" value="USP_1"/>
    <property type="match status" value="1"/>
</dbReference>
<dbReference type="PROSITE" id="PS00973">
    <property type="entry name" value="USP_2"/>
    <property type="match status" value="1"/>
</dbReference>
<dbReference type="PROSITE" id="PS50235">
    <property type="entry name" value="USP_3"/>
    <property type="match status" value="1"/>
</dbReference>
<keyword id="KW-0025">Alternative splicing</keyword>
<keyword id="KW-0106">Calcium</keyword>
<keyword id="KW-0378">Hydrolase</keyword>
<keyword id="KW-0479">Metal-binding</keyword>
<keyword id="KW-0597">Phosphoprotein</keyword>
<keyword id="KW-0645">Protease</keyword>
<keyword id="KW-1185">Reference proteome</keyword>
<keyword id="KW-0677">Repeat</keyword>
<keyword id="KW-0788">Thiol protease</keyword>
<keyword id="KW-0833">Ubl conjugation pathway</keyword>
<organism evidence="11">
    <name type="scientific">Drosophila melanogaster</name>
    <name type="common">Fruit fly</name>
    <dbReference type="NCBI Taxonomy" id="7227"/>
    <lineage>
        <taxon>Eukaryota</taxon>
        <taxon>Metazoa</taxon>
        <taxon>Ecdysozoa</taxon>
        <taxon>Arthropoda</taxon>
        <taxon>Hexapoda</taxon>
        <taxon>Insecta</taxon>
        <taxon>Pterygota</taxon>
        <taxon>Neoptera</taxon>
        <taxon>Endopterygota</taxon>
        <taxon>Diptera</taxon>
        <taxon>Brachycera</taxon>
        <taxon>Muscomorpha</taxon>
        <taxon>Ephydroidea</taxon>
        <taxon>Drosophilidae</taxon>
        <taxon>Drosophila</taxon>
        <taxon>Sophophora</taxon>
    </lineage>
</organism>
<sequence>MLYAACGGTQRGISFNDLLCGLVLITRGTQAEKTKFLWNLYCNDAGTFIIKSDYVRNVNLAPFESVSLFAQSERVNFEQFQDWIIKHRNATVLSKWLLSDNCVSLTSELETPTFYQSLAGVTHLEEKDIGDLEKEFWRLKNTSQNGQIDLQFLGPLISPPIPKNALAGLFNAFDENRDGHIDFKELCCGVSAACRGPGVERTRFCFKIFDVDRDGVLSHDETLQMINVLLLVAKENQESQQYKDLTKQLVISDLLEFGQRRSPDGTPSKLTRDNVSLTAEDFMLWTVQCDLRLMQPLLDLIFELCHIVFGLWPQCKHMENDIVRGWLRREERRPYRVGQFWYLITHDWWLSWMQYTQHTTHTCDYCKRTASQRTAVDEALVCDESFNTHSLEQHDSYSLGSGTGSASGSGSASSGISAGRHCGPVRPGPIDNSNLITANPFRNVRTLTGEGGHLKRDTPLVQNHDFELVPKSLWKALNRWYGDNLPLPRQVIQPPNSDVELELYPLNLRILLHQAQPSQTGVGGGTQLGSWGSTVSGGYGVLASGGGYAAIAVSSVLQPPKRYLAYTAAFSRLATVRQVGEFLCEQLRLKSEDIRLWHVPQLDNGAILLEEDAMCLKELLIRDNDQLLLEIRNKDLTWPEELGSLATAQCGQGAGTPGDRRRLTRSSIMSVHAPGATGLHNLGNTCFMNAALQVLFNTQPLAQYFQREMHRFEVNAANKLGTKGQLAMRYAELLKEVWTATTRSVAPLKLRFCVNKYAPQFAGGGQHDSQELLEWLLDALHEDLNRVMEKPYSELKDSNGRPDKIVAAEAWSQHHARNQSIIIDLFYGQLKSKVSCLGCGHESVRFDPFSLLSLPLPVENYIYFEVLVILLDGSVPIKYGFRLNSDCKYSHLKHKLSTMCSLPPNLMLVCELWNSQIRQVLNDDEKLRTQSAKELYVYQLPEQSMRTRSNSGLSMHIEQGLKDIQRSSALITSAQDSLSSLSTLQTSSHRASSRVLCNGHVSGLDVEGEAEVGTDVSQCNSNSNYNPIVSTYSGNGSGDNQVHELLPDEAGKVSRCFGKRECMPHSLFCFKESLILSSSPENTFMHGAAAQQKRVSSAKLLHTESNTSSMSYTNHSGENSMESSLTEPIPLADLEPVSSRNGSGGEDCSYRTSPNDSSGLSTGHTLGASLDVDEQAEEGNAEDHDQPDQITTSQPETSSGVYSRRSSQPPHKAGKYLVAVHRKITRHDSYFLSYHKTRPSLFGVPLLIPNSEGGTHKDLYCAVWLQVSRLLSPLPATTEQANHAADCDDSLGYDFPFTLRAVKADGLTCAICPWSSFCRGCEIRCNNDYVLQGALPPINAAASNTSTPKMNAKFPSLPNLEAKRTPEYTASLSYTPTTKYFEDFTIAIDWDPTALHLRYQSTLERLWVDHETIAISRREQVEPVDLNHCLRAFTSEEKLEQWYHCSHCKGKKPATKKLQIWKLPPILIVHLKRFNCVNGKWVKSQKVVHFPFDDFDPTPYLASVPQETILRHKELLELKNDAEMTMATNEVVSELDEIDAPSKEVKEELPNQTGSTKATASPPPTGNILRQSKTKNAVRRQRLISTSLTKTPIVDGEFEDYHQHRLKPDVDQFDPRYRLYAVVSHSGMLNGGHYISYASNATGSWYCYNDSSCREISQKPVIDPSAAYLLFYERKGLDYEPYLPNIEGRTLPNTASVPLEVDETEGELKKLCSIS</sequence>
<feature type="chain" id="PRO_0000442142" description="Ubiquitin carboxyl-terminal hydrolase 32" evidence="2">
    <location>
        <begin position="1"/>
        <end position="1715"/>
    </location>
</feature>
<feature type="domain" description="EF-hand 1" evidence="3">
    <location>
        <begin position="161"/>
        <end position="196"/>
    </location>
</feature>
<feature type="domain" description="EF-hand 2" evidence="3">
    <location>
        <begin position="197"/>
        <end position="232"/>
    </location>
</feature>
<feature type="domain" description="DUSP" evidence="4">
    <location>
        <begin position="314"/>
        <end position="492"/>
    </location>
</feature>
<feature type="domain" description="USP" evidence="5">
    <location>
        <begin position="677"/>
        <end position="1675"/>
    </location>
</feature>
<feature type="region of interest" description="Disordered" evidence="6">
    <location>
        <begin position="393"/>
        <end position="429"/>
    </location>
</feature>
<feature type="region of interest" description="Disordered" evidence="6">
    <location>
        <begin position="1103"/>
        <end position="1213"/>
    </location>
</feature>
<feature type="region of interest" description="Disordered" evidence="6">
    <location>
        <begin position="1536"/>
        <end position="1569"/>
    </location>
</feature>
<feature type="compositionally biased region" description="Low complexity" evidence="6">
    <location>
        <begin position="408"/>
        <end position="419"/>
    </location>
</feature>
<feature type="compositionally biased region" description="Polar residues" evidence="6">
    <location>
        <begin position="1103"/>
        <end position="1126"/>
    </location>
</feature>
<feature type="compositionally biased region" description="Polar residues" evidence="6">
    <location>
        <begin position="1150"/>
        <end position="1164"/>
    </location>
</feature>
<feature type="compositionally biased region" description="Acidic residues" evidence="6">
    <location>
        <begin position="1171"/>
        <end position="1180"/>
    </location>
</feature>
<feature type="compositionally biased region" description="Polar residues" evidence="6">
    <location>
        <begin position="1188"/>
        <end position="1209"/>
    </location>
</feature>
<feature type="compositionally biased region" description="Basic and acidic residues" evidence="6">
    <location>
        <begin position="1540"/>
        <end position="1549"/>
    </location>
</feature>
<feature type="compositionally biased region" description="Polar residues" evidence="6">
    <location>
        <begin position="1550"/>
        <end position="1559"/>
    </location>
</feature>
<feature type="active site" description="Nucleophile" evidence="5">
    <location>
        <position position="686"/>
    </location>
</feature>
<feature type="active site" description="Proton acceptor" evidence="5">
    <location>
        <position position="1633"/>
    </location>
</feature>
<feature type="binding site" evidence="3">
    <location>
        <position position="174"/>
    </location>
    <ligand>
        <name>Ca(2+)</name>
        <dbReference type="ChEBI" id="CHEBI:29108"/>
        <label>1</label>
    </ligand>
</feature>
<feature type="binding site" evidence="3">
    <location>
        <position position="176"/>
    </location>
    <ligand>
        <name>Ca(2+)</name>
        <dbReference type="ChEBI" id="CHEBI:29108"/>
        <label>1</label>
    </ligand>
</feature>
<feature type="binding site" evidence="3">
    <location>
        <position position="178"/>
    </location>
    <ligand>
        <name>Ca(2+)</name>
        <dbReference type="ChEBI" id="CHEBI:29108"/>
        <label>1</label>
    </ligand>
</feature>
<feature type="binding site" evidence="3">
    <location>
        <position position="180"/>
    </location>
    <ligand>
        <name>Ca(2+)</name>
        <dbReference type="ChEBI" id="CHEBI:29108"/>
        <label>1</label>
    </ligand>
</feature>
<feature type="binding site" evidence="3">
    <location>
        <position position="185"/>
    </location>
    <ligand>
        <name>Ca(2+)</name>
        <dbReference type="ChEBI" id="CHEBI:29108"/>
        <label>1</label>
    </ligand>
</feature>
<feature type="binding site" evidence="9">
    <location>
        <position position="210"/>
    </location>
    <ligand>
        <name>Ca(2+)</name>
        <dbReference type="ChEBI" id="CHEBI:29108"/>
        <label>2</label>
    </ligand>
</feature>
<feature type="binding site" evidence="9">
    <location>
        <position position="212"/>
    </location>
    <ligand>
        <name>Ca(2+)</name>
        <dbReference type="ChEBI" id="CHEBI:29108"/>
        <label>2</label>
    </ligand>
</feature>
<feature type="binding site" evidence="9">
    <location>
        <position position="214"/>
    </location>
    <ligand>
        <name>Ca(2+)</name>
        <dbReference type="ChEBI" id="CHEBI:29108"/>
        <label>2</label>
    </ligand>
</feature>
<feature type="binding site" evidence="9">
    <location>
        <position position="221"/>
    </location>
    <ligand>
        <name>Ca(2+)</name>
        <dbReference type="ChEBI" id="CHEBI:29108"/>
        <label>2</label>
    </ligand>
</feature>
<feature type="splice variant" id="VSP_059180" description="In isoform C and isoform D.">
    <location>
        <begin position="1053"/>
        <end position="1071"/>
    </location>
</feature>
<feature type="splice variant" id="VSP_059181" description="In isoform D and isoform E.">
    <location>
        <begin position="1288"/>
        <end position="1290"/>
    </location>
</feature>